<protein>
    <recommendedName>
        <fullName evidence="1">Large ribosomal subunit protein uL18</fullName>
    </recommendedName>
    <alternativeName>
        <fullName evidence="2">50S ribosomal protein L18</fullName>
    </alternativeName>
</protein>
<comment type="function">
    <text evidence="1">This is one of the proteins that bind and probably mediate the attachment of the 5S RNA into the large ribosomal subunit, where it forms part of the central protuberance.</text>
</comment>
<comment type="subunit">
    <text evidence="1">Part of the 50S ribosomal subunit; part of the 5S rRNA/L5/L18/L25 subcomplex. Contacts the 5S and 23S rRNAs.</text>
</comment>
<comment type="similarity">
    <text evidence="1">Belongs to the universal ribosomal protein uL18 family.</text>
</comment>
<proteinExistence type="inferred from homology"/>
<name>RL18_VIBPR</name>
<sequence>MDKKASRIRRATRARRKIAELGATRLVVHRTPRHVYAQVIASNGSEVIAAASTVEKAIREQVKNTGNVDAAKAVGKAIAERALEKGVETVAFDRSGFQYHGRVAALAESAREAGLKF</sequence>
<feature type="chain" id="PRO_0000131383" description="Large ribosomal subunit protein uL18">
    <location>
        <begin position="1"/>
        <end position="117"/>
    </location>
</feature>
<accession>P52863</accession>
<keyword id="KW-0687">Ribonucleoprotein</keyword>
<keyword id="KW-0689">Ribosomal protein</keyword>
<keyword id="KW-0694">RNA-binding</keyword>
<keyword id="KW-0699">rRNA-binding</keyword>
<dbReference type="EMBL" id="U38943">
    <property type="protein sequence ID" value="AAB41329.1"/>
    <property type="molecule type" value="Genomic_DNA"/>
</dbReference>
<dbReference type="PIR" id="JC5753">
    <property type="entry name" value="JC5753"/>
</dbReference>
<dbReference type="RefSeq" id="WP_021704465.1">
    <property type="nucleotide sequence ID" value="NZ_BAABTA010000004.1"/>
</dbReference>
<dbReference type="SMR" id="P52863"/>
<dbReference type="GO" id="GO:0022625">
    <property type="term" value="C:cytosolic large ribosomal subunit"/>
    <property type="evidence" value="ECO:0007669"/>
    <property type="project" value="TreeGrafter"/>
</dbReference>
<dbReference type="GO" id="GO:0008097">
    <property type="term" value="F:5S rRNA binding"/>
    <property type="evidence" value="ECO:0007669"/>
    <property type="project" value="TreeGrafter"/>
</dbReference>
<dbReference type="GO" id="GO:0003735">
    <property type="term" value="F:structural constituent of ribosome"/>
    <property type="evidence" value="ECO:0007669"/>
    <property type="project" value="InterPro"/>
</dbReference>
<dbReference type="GO" id="GO:0006412">
    <property type="term" value="P:translation"/>
    <property type="evidence" value="ECO:0007669"/>
    <property type="project" value="UniProtKB-UniRule"/>
</dbReference>
<dbReference type="CDD" id="cd00432">
    <property type="entry name" value="Ribosomal_L18_L5e"/>
    <property type="match status" value="1"/>
</dbReference>
<dbReference type="FunFam" id="3.30.420.100:FF:000001">
    <property type="entry name" value="50S ribosomal protein L18"/>
    <property type="match status" value="1"/>
</dbReference>
<dbReference type="Gene3D" id="3.30.420.100">
    <property type="match status" value="1"/>
</dbReference>
<dbReference type="HAMAP" id="MF_01337_B">
    <property type="entry name" value="Ribosomal_uL18_B"/>
    <property type="match status" value="1"/>
</dbReference>
<dbReference type="InterPro" id="IPR004389">
    <property type="entry name" value="Ribosomal_uL18_bac-type"/>
</dbReference>
<dbReference type="InterPro" id="IPR005484">
    <property type="entry name" value="Ribosomal_uL18_bac/euk"/>
</dbReference>
<dbReference type="NCBIfam" id="TIGR00060">
    <property type="entry name" value="L18_bact"/>
    <property type="match status" value="1"/>
</dbReference>
<dbReference type="PANTHER" id="PTHR12899">
    <property type="entry name" value="39S RIBOSOMAL PROTEIN L18, MITOCHONDRIAL"/>
    <property type="match status" value="1"/>
</dbReference>
<dbReference type="PANTHER" id="PTHR12899:SF3">
    <property type="entry name" value="LARGE RIBOSOMAL SUBUNIT PROTEIN UL18M"/>
    <property type="match status" value="1"/>
</dbReference>
<dbReference type="Pfam" id="PF00861">
    <property type="entry name" value="Ribosomal_L18p"/>
    <property type="match status" value="1"/>
</dbReference>
<dbReference type="SUPFAM" id="SSF53137">
    <property type="entry name" value="Translational machinery components"/>
    <property type="match status" value="1"/>
</dbReference>
<gene>
    <name evidence="1" type="primary">rplR</name>
</gene>
<evidence type="ECO:0000255" key="1">
    <source>
        <dbReference type="HAMAP-Rule" id="MF_01337"/>
    </source>
</evidence>
<evidence type="ECO:0000305" key="2"/>
<organism>
    <name type="scientific">Vibrio proteolyticus</name>
    <name type="common">Aeromonas proteolytica</name>
    <dbReference type="NCBI Taxonomy" id="671"/>
    <lineage>
        <taxon>Bacteria</taxon>
        <taxon>Pseudomonadati</taxon>
        <taxon>Pseudomonadota</taxon>
        <taxon>Gammaproteobacteria</taxon>
        <taxon>Vibrionales</taxon>
        <taxon>Vibrionaceae</taxon>
        <taxon>Vibrio</taxon>
    </lineage>
</organism>
<reference key="1">
    <citation type="journal article" date="1996" name="Gene">
        <title>Sequence, overproduction and purification of Vibrio proteolyticus ribosomal protein L18 for in vitro and in vivo studies.</title>
        <authorList>
            <person name="Setterquist R.A."/>
            <person name="Smith G.K."/>
            <person name="Oakley T.H."/>
            <person name="Lee Y.H."/>
            <person name="Fox G.E."/>
        </authorList>
    </citation>
    <scope>NUCLEOTIDE SEQUENCE [GENOMIC DNA]</scope>
    <source>
        <strain>ATCC 15338 / DSM 30189 / CCUG 20302 / JCM 21193 / LMG 3772 / NBRC 13287 / NCIMB 1326</strain>
    </source>
</reference>